<sequence>MSVTKEIKTDIINQFGGSEKNTGQTEVQIALFSRRISDLTGHLKLHPKDKHSRHGLLKLVGKRKSLVAYLKKTDIGRYRKVLADLDLRK</sequence>
<organism>
    <name type="scientific">Chlorobium phaeobacteroides (strain BS1)</name>
    <dbReference type="NCBI Taxonomy" id="331678"/>
    <lineage>
        <taxon>Bacteria</taxon>
        <taxon>Pseudomonadati</taxon>
        <taxon>Chlorobiota</taxon>
        <taxon>Chlorobiia</taxon>
        <taxon>Chlorobiales</taxon>
        <taxon>Chlorobiaceae</taxon>
        <taxon>Chlorobium/Pelodictyon group</taxon>
        <taxon>Chlorobium</taxon>
    </lineage>
</organism>
<accession>B3ELP2</accession>
<keyword id="KW-0687">Ribonucleoprotein</keyword>
<keyword id="KW-0689">Ribosomal protein</keyword>
<keyword id="KW-0694">RNA-binding</keyword>
<keyword id="KW-0699">rRNA-binding</keyword>
<protein>
    <recommendedName>
        <fullName evidence="1">Small ribosomal subunit protein uS15</fullName>
    </recommendedName>
    <alternativeName>
        <fullName evidence="2">30S ribosomal protein S15</fullName>
    </alternativeName>
</protein>
<proteinExistence type="inferred from homology"/>
<comment type="function">
    <text evidence="1">One of the primary rRNA binding proteins, it binds directly to 16S rRNA where it helps nucleate assembly of the platform of the 30S subunit by binding and bridging several RNA helices of the 16S rRNA.</text>
</comment>
<comment type="function">
    <text evidence="1">Forms an intersubunit bridge (bridge B4) with the 23S rRNA of the 50S subunit in the ribosome.</text>
</comment>
<comment type="subunit">
    <text evidence="1">Part of the 30S ribosomal subunit. Forms a bridge to the 50S subunit in the 70S ribosome, contacting the 23S rRNA.</text>
</comment>
<comment type="similarity">
    <text evidence="1">Belongs to the universal ribosomal protein uS15 family.</text>
</comment>
<evidence type="ECO:0000255" key="1">
    <source>
        <dbReference type="HAMAP-Rule" id="MF_01343"/>
    </source>
</evidence>
<evidence type="ECO:0000305" key="2"/>
<reference key="1">
    <citation type="submission" date="2008-06" db="EMBL/GenBank/DDBJ databases">
        <title>Complete sequence of Chlorobium phaeobacteroides BS1.</title>
        <authorList>
            <consortium name="US DOE Joint Genome Institute"/>
            <person name="Lucas S."/>
            <person name="Copeland A."/>
            <person name="Lapidus A."/>
            <person name="Glavina del Rio T."/>
            <person name="Dalin E."/>
            <person name="Tice H."/>
            <person name="Bruce D."/>
            <person name="Goodwin L."/>
            <person name="Pitluck S."/>
            <person name="Schmutz J."/>
            <person name="Larimer F."/>
            <person name="Land M."/>
            <person name="Hauser L."/>
            <person name="Kyrpides N."/>
            <person name="Ovchinnikova G."/>
            <person name="Li T."/>
            <person name="Liu Z."/>
            <person name="Zhao F."/>
            <person name="Overmann J."/>
            <person name="Bryant D.A."/>
            <person name="Richardson P."/>
        </authorList>
    </citation>
    <scope>NUCLEOTIDE SEQUENCE [LARGE SCALE GENOMIC DNA]</scope>
    <source>
        <strain>BS1</strain>
    </source>
</reference>
<feature type="chain" id="PRO_1000143092" description="Small ribosomal subunit protein uS15">
    <location>
        <begin position="1"/>
        <end position="89"/>
    </location>
</feature>
<name>RS15_CHLPB</name>
<gene>
    <name evidence="1" type="primary">rpsO</name>
    <name type="ordered locus">Cphamn1_0406</name>
</gene>
<dbReference type="EMBL" id="CP001101">
    <property type="protein sequence ID" value="ACE03371.1"/>
    <property type="molecule type" value="Genomic_DNA"/>
</dbReference>
<dbReference type="SMR" id="B3ELP2"/>
<dbReference type="STRING" id="331678.Cphamn1_0406"/>
<dbReference type="KEGG" id="cpb:Cphamn1_0406"/>
<dbReference type="eggNOG" id="COG0184">
    <property type="taxonomic scope" value="Bacteria"/>
</dbReference>
<dbReference type="HOGENOM" id="CLU_148518_0_0_10"/>
<dbReference type="OrthoDB" id="9799262at2"/>
<dbReference type="GO" id="GO:0022627">
    <property type="term" value="C:cytosolic small ribosomal subunit"/>
    <property type="evidence" value="ECO:0007669"/>
    <property type="project" value="TreeGrafter"/>
</dbReference>
<dbReference type="GO" id="GO:0019843">
    <property type="term" value="F:rRNA binding"/>
    <property type="evidence" value="ECO:0007669"/>
    <property type="project" value="UniProtKB-UniRule"/>
</dbReference>
<dbReference type="GO" id="GO:0003735">
    <property type="term" value="F:structural constituent of ribosome"/>
    <property type="evidence" value="ECO:0007669"/>
    <property type="project" value="InterPro"/>
</dbReference>
<dbReference type="GO" id="GO:0006412">
    <property type="term" value="P:translation"/>
    <property type="evidence" value="ECO:0007669"/>
    <property type="project" value="UniProtKB-UniRule"/>
</dbReference>
<dbReference type="CDD" id="cd00353">
    <property type="entry name" value="Ribosomal_S15p_S13e"/>
    <property type="match status" value="1"/>
</dbReference>
<dbReference type="FunFam" id="1.10.287.10:FF:000002">
    <property type="entry name" value="30S ribosomal protein S15"/>
    <property type="match status" value="1"/>
</dbReference>
<dbReference type="Gene3D" id="6.10.250.3130">
    <property type="match status" value="1"/>
</dbReference>
<dbReference type="Gene3D" id="1.10.287.10">
    <property type="entry name" value="S15/NS1, RNA-binding"/>
    <property type="match status" value="1"/>
</dbReference>
<dbReference type="HAMAP" id="MF_01343_B">
    <property type="entry name" value="Ribosomal_uS15_B"/>
    <property type="match status" value="1"/>
</dbReference>
<dbReference type="InterPro" id="IPR000589">
    <property type="entry name" value="Ribosomal_uS15"/>
</dbReference>
<dbReference type="InterPro" id="IPR005290">
    <property type="entry name" value="Ribosomal_uS15_bac-type"/>
</dbReference>
<dbReference type="InterPro" id="IPR009068">
    <property type="entry name" value="uS15_NS1_RNA-bd_sf"/>
</dbReference>
<dbReference type="NCBIfam" id="TIGR00952">
    <property type="entry name" value="S15_bact"/>
    <property type="match status" value="1"/>
</dbReference>
<dbReference type="PANTHER" id="PTHR23321">
    <property type="entry name" value="RIBOSOMAL PROTEIN S15, BACTERIAL AND ORGANELLAR"/>
    <property type="match status" value="1"/>
</dbReference>
<dbReference type="PANTHER" id="PTHR23321:SF26">
    <property type="entry name" value="SMALL RIBOSOMAL SUBUNIT PROTEIN US15M"/>
    <property type="match status" value="1"/>
</dbReference>
<dbReference type="Pfam" id="PF00312">
    <property type="entry name" value="Ribosomal_S15"/>
    <property type="match status" value="1"/>
</dbReference>
<dbReference type="SMART" id="SM01387">
    <property type="entry name" value="Ribosomal_S15"/>
    <property type="match status" value="1"/>
</dbReference>
<dbReference type="SUPFAM" id="SSF47060">
    <property type="entry name" value="S15/NS1 RNA-binding domain"/>
    <property type="match status" value="1"/>
</dbReference>
<dbReference type="PROSITE" id="PS00362">
    <property type="entry name" value="RIBOSOMAL_S15"/>
    <property type="match status" value="1"/>
</dbReference>